<feature type="signal peptide" evidence="3">
    <location>
        <begin position="1"/>
        <end position="28"/>
    </location>
</feature>
<feature type="chain" id="PRO_0000383470" description="Chitinase 10">
    <location>
        <begin position="29"/>
        <end position="290"/>
    </location>
</feature>
<feature type="active site" description="Proton donor" evidence="2">
    <location>
        <position position="114"/>
    </location>
</feature>
<feature type="glycosylation site" description="N-linked (GlcNAc...) asparagine" evidence="3">
    <location>
        <position position="193"/>
    </location>
</feature>
<feature type="glycosylation site" description="N-linked (GlcNAc...) asparagine" evidence="3">
    <location>
        <position position="234"/>
    </location>
</feature>
<feature type="disulfide bond" evidence="1">
    <location>
        <begin position="70"/>
        <end position="132"/>
    </location>
</feature>
<feature type="disulfide bond" evidence="1">
    <location>
        <begin position="144"/>
        <end position="153"/>
    </location>
</feature>
<feature type="disulfide bond" evidence="1">
    <location>
        <begin position="252"/>
        <end position="284"/>
    </location>
</feature>
<evidence type="ECO:0000250" key="1"/>
<evidence type="ECO:0000250" key="2">
    <source>
        <dbReference type="UniProtKB" id="P29022"/>
    </source>
</evidence>
<evidence type="ECO:0000255" key="3"/>
<evidence type="ECO:0000269" key="4">
    <source>
    </source>
</evidence>
<evidence type="ECO:0000305" key="5"/>
<comment type="catalytic activity">
    <reaction>
        <text>Random endo-hydrolysis of N-acetyl-beta-D-glucosaminide (1-&gt;4)-beta-linkages in chitin and chitodextrins.</text>
        <dbReference type="EC" id="3.2.1.14"/>
    </reaction>
</comment>
<comment type="tissue specificity">
    <text evidence="4">Expressed at low levels in roots, leaves and meristems.</text>
</comment>
<comment type="similarity">
    <text evidence="5">Belongs to the glycosyl hydrolase 19 family. Chitinase class I subfamily.</text>
</comment>
<comment type="caution">
    <text evidence="5">Lacks the chitin binding type-1 domain which is one of the conserved features of the chitinase class I and class IV subfamilies.</text>
</comment>
<dbReference type="EC" id="3.2.1.14"/>
<dbReference type="EMBL" id="AP002070">
    <property type="protein sequence ID" value="BAD81341.1"/>
    <property type="molecule type" value="Genomic_DNA"/>
</dbReference>
<dbReference type="EMBL" id="AP008207">
    <property type="protein sequence ID" value="BAF04694.1"/>
    <property type="molecule type" value="Genomic_DNA"/>
</dbReference>
<dbReference type="EMBL" id="AP014957">
    <property type="protein sequence ID" value="BAS71636.1"/>
    <property type="molecule type" value="Genomic_DNA"/>
</dbReference>
<dbReference type="EMBL" id="CM000138">
    <property type="protein sequence ID" value="EAZ11500.1"/>
    <property type="molecule type" value="Genomic_DNA"/>
</dbReference>
<dbReference type="EMBL" id="AK063062">
    <property type="protein sequence ID" value="BAG88540.1"/>
    <property type="molecule type" value="mRNA"/>
</dbReference>
<dbReference type="SMR" id="Q5NB11"/>
<dbReference type="FunCoup" id="Q5NB11">
    <property type="interactions" value="98"/>
</dbReference>
<dbReference type="STRING" id="39947.Q5NB11"/>
<dbReference type="GlyCosmos" id="Q5NB11">
    <property type="glycosylation" value="2 sites, No reported glycans"/>
</dbReference>
<dbReference type="PaxDb" id="39947-Q5NB11"/>
<dbReference type="EnsemblPlants" id="Os01t0287600-01">
    <property type="protein sequence ID" value="Os01t0287600-01"/>
    <property type="gene ID" value="Os01g0287600"/>
</dbReference>
<dbReference type="Gramene" id="Os01t0287600-01">
    <property type="protein sequence ID" value="Os01t0287600-01"/>
    <property type="gene ID" value="Os01g0287600"/>
</dbReference>
<dbReference type="KEGG" id="dosa:Os01g0287600"/>
<dbReference type="eggNOG" id="KOG4742">
    <property type="taxonomic scope" value="Eukaryota"/>
</dbReference>
<dbReference type="HOGENOM" id="CLU_045506_1_0_1"/>
<dbReference type="InParanoid" id="Q5NB11"/>
<dbReference type="OMA" id="TISTWYW"/>
<dbReference type="Proteomes" id="UP000000763">
    <property type="component" value="Chromosome 1"/>
</dbReference>
<dbReference type="Proteomes" id="UP000007752">
    <property type="component" value="Chromosome 1"/>
</dbReference>
<dbReference type="Proteomes" id="UP000059680">
    <property type="component" value="Chromosome 1"/>
</dbReference>
<dbReference type="GO" id="GO:0004568">
    <property type="term" value="F:chitinase activity"/>
    <property type="evidence" value="ECO:0000318"/>
    <property type="project" value="GO_Central"/>
</dbReference>
<dbReference type="GO" id="GO:0008843">
    <property type="term" value="F:endochitinase activity"/>
    <property type="evidence" value="ECO:0007669"/>
    <property type="project" value="UniProtKB-EC"/>
</dbReference>
<dbReference type="GO" id="GO:0016998">
    <property type="term" value="P:cell wall macromolecule catabolic process"/>
    <property type="evidence" value="ECO:0007669"/>
    <property type="project" value="InterPro"/>
</dbReference>
<dbReference type="GO" id="GO:0006032">
    <property type="term" value="P:chitin catabolic process"/>
    <property type="evidence" value="ECO:0007669"/>
    <property type="project" value="InterPro"/>
</dbReference>
<dbReference type="GO" id="GO:0000272">
    <property type="term" value="P:polysaccharide catabolic process"/>
    <property type="evidence" value="ECO:0007669"/>
    <property type="project" value="UniProtKB-KW"/>
</dbReference>
<dbReference type="CDD" id="cd00325">
    <property type="entry name" value="chitinase_GH19"/>
    <property type="match status" value="1"/>
</dbReference>
<dbReference type="FunFam" id="3.30.20.10:FF:000001">
    <property type="entry name" value="Endochitinase (Chitinase)"/>
    <property type="match status" value="1"/>
</dbReference>
<dbReference type="Gene3D" id="1.10.530.10">
    <property type="match status" value="1"/>
</dbReference>
<dbReference type="Gene3D" id="3.30.20.10">
    <property type="entry name" value="Endochitinase, domain 2"/>
    <property type="match status" value="1"/>
</dbReference>
<dbReference type="InterPro" id="IPR016283">
    <property type="entry name" value="Glyco_hydro_19"/>
</dbReference>
<dbReference type="InterPro" id="IPR000726">
    <property type="entry name" value="Glyco_hydro_19_cat"/>
</dbReference>
<dbReference type="InterPro" id="IPR023346">
    <property type="entry name" value="Lysozyme-like_dom_sf"/>
</dbReference>
<dbReference type="PANTHER" id="PTHR22595:SF111">
    <property type="entry name" value="CHITINASE 10"/>
    <property type="match status" value="1"/>
</dbReference>
<dbReference type="PANTHER" id="PTHR22595">
    <property type="entry name" value="CHITINASE-RELATED"/>
    <property type="match status" value="1"/>
</dbReference>
<dbReference type="Pfam" id="PF00182">
    <property type="entry name" value="Glyco_hydro_19"/>
    <property type="match status" value="1"/>
</dbReference>
<dbReference type="PIRSF" id="PIRSF001060">
    <property type="entry name" value="Endochitinase"/>
    <property type="match status" value="1"/>
</dbReference>
<dbReference type="SUPFAM" id="SSF53955">
    <property type="entry name" value="Lysozyme-like"/>
    <property type="match status" value="1"/>
</dbReference>
<dbReference type="PROSITE" id="PS00773">
    <property type="entry name" value="CHITINASE_19_1"/>
    <property type="match status" value="1"/>
</dbReference>
<dbReference type="PROSITE" id="PS00774">
    <property type="entry name" value="CHITINASE_19_2"/>
    <property type="match status" value="1"/>
</dbReference>
<sequence>MAKPTPAPRATPFLLAAVLSIVVVAASGAEARWYGGGGGGGYSPSPSPVSSIVSEQLYASLFLHKDDAACPARGFYTYASFVRAATRFPRFAATGCADARKREVAAFLAQISHETTGGWATAPDGPYAWGLCYKEEINPQSSYCDATDKQWPCYPGKSYHGRGPIQISWNFNYGPAGQALGFDGLRNPEIVANCSDIAFQTALWFWMTPRDTKPSCHQVMVGEYRPGPADVAANRTAGFGLVTNIVNGGLECNRAGDARVNNRIGFYRRYCQVLGVDVGPNLDCEHQQPF</sequence>
<name>CHI10_ORYSJ</name>
<proteinExistence type="evidence at transcript level"/>
<organism>
    <name type="scientific">Oryza sativa subsp. japonica</name>
    <name type="common">Rice</name>
    <dbReference type="NCBI Taxonomy" id="39947"/>
    <lineage>
        <taxon>Eukaryota</taxon>
        <taxon>Viridiplantae</taxon>
        <taxon>Streptophyta</taxon>
        <taxon>Embryophyta</taxon>
        <taxon>Tracheophyta</taxon>
        <taxon>Spermatophyta</taxon>
        <taxon>Magnoliopsida</taxon>
        <taxon>Liliopsida</taxon>
        <taxon>Poales</taxon>
        <taxon>Poaceae</taxon>
        <taxon>BOP clade</taxon>
        <taxon>Oryzoideae</taxon>
        <taxon>Oryzeae</taxon>
        <taxon>Oryzinae</taxon>
        <taxon>Oryza</taxon>
        <taxon>Oryza sativa</taxon>
    </lineage>
</organism>
<reference key="1">
    <citation type="journal article" date="2002" name="Nature">
        <title>The genome sequence and structure of rice chromosome 1.</title>
        <authorList>
            <person name="Sasaki T."/>
            <person name="Matsumoto T."/>
            <person name="Yamamoto K."/>
            <person name="Sakata K."/>
            <person name="Baba T."/>
            <person name="Katayose Y."/>
            <person name="Wu J."/>
            <person name="Niimura Y."/>
            <person name="Cheng Z."/>
            <person name="Nagamura Y."/>
            <person name="Antonio B.A."/>
            <person name="Kanamori H."/>
            <person name="Hosokawa S."/>
            <person name="Masukawa M."/>
            <person name="Arikawa K."/>
            <person name="Chiden Y."/>
            <person name="Hayashi M."/>
            <person name="Okamoto M."/>
            <person name="Ando T."/>
            <person name="Aoki H."/>
            <person name="Arita K."/>
            <person name="Hamada M."/>
            <person name="Harada C."/>
            <person name="Hijishita S."/>
            <person name="Honda M."/>
            <person name="Ichikawa Y."/>
            <person name="Idonuma A."/>
            <person name="Iijima M."/>
            <person name="Ikeda M."/>
            <person name="Ikeno M."/>
            <person name="Ito S."/>
            <person name="Ito T."/>
            <person name="Ito Y."/>
            <person name="Ito Y."/>
            <person name="Iwabuchi A."/>
            <person name="Kamiya K."/>
            <person name="Karasawa W."/>
            <person name="Katagiri S."/>
            <person name="Kikuta A."/>
            <person name="Kobayashi N."/>
            <person name="Kono I."/>
            <person name="Machita K."/>
            <person name="Maehara T."/>
            <person name="Mizuno H."/>
            <person name="Mizubayashi T."/>
            <person name="Mukai Y."/>
            <person name="Nagasaki H."/>
            <person name="Nakashima M."/>
            <person name="Nakama Y."/>
            <person name="Nakamichi Y."/>
            <person name="Nakamura M."/>
            <person name="Namiki N."/>
            <person name="Negishi M."/>
            <person name="Ohta I."/>
            <person name="Ono N."/>
            <person name="Saji S."/>
            <person name="Sakai K."/>
            <person name="Shibata M."/>
            <person name="Shimokawa T."/>
            <person name="Shomura A."/>
            <person name="Song J."/>
            <person name="Takazaki Y."/>
            <person name="Terasawa K."/>
            <person name="Tsuji K."/>
            <person name="Waki K."/>
            <person name="Yamagata H."/>
            <person name="Yamane H."/>
            <person name="Yoshiki S."/>
            <person name="Yoshihara R."/>
            <person name="Yukawa K."/>
            <person name="Zhong H."/>
            <person name="Iwama H."/>
            <person name="Endo T."/>
            <person name="Ito H."/>
            <person name="Hahn J.H."/>
            <person name="Kim H.-I."/>
            <person name="Eun M.-Y."/>
            <person name="Yano M."/>
            <person name="Jiang J."/>
            <person name="Gojobori T."/>
        </authorList>
    </citation>
    <scope>NUCLEOTIDE SEQUENCE [LARGE SCALE GENOMIC DNA]</scope>
    <source>
        <strain>cv. Nipponbare</strain>
    </source>
</reference>
<reference key="2">
    <citation type="journal article" date="2005" name="Nature">
        <title>The map-based sequence of the rice genome.</title>
        <authorList>
            <consortium name="International rice genome sequencing project (IRGSP)"/>
        </authorList>
    </citation>
    <scope>NUCLEOTIDE SEQUENCE [LARGE SCALE GENOMIC DNA]</scope>
    <source>
        <strain>cv. Nipponbare</strain>
    </source>
</reference>
<reference key="3">
    <citation type="journal article" date="2008" name="Nucleic Acids Res.">
        <title>The rice annotation project database (RAP-DB): 2008 update.</title>
        <authorList>
            <consortium name="The rice annotation project (RAP)"/>
        </authorList>
    </citation>
    <scope>GENOME REANNOTATION</scope>
    <source>
        <strain>cv. Nipponbare</strain>
    </source>
</reference>
<reference key="4">
    <citation type="journal article" date="2013" name="Rice">
        <title>Improvement of the Oryza sativa Nipponbare reference genome using next generation sequence and optical map data.</title>
        <authorList>
            <person name="Kawahara Y."/>
            <person name="de la Bastide M."/>
            <person name="Hamilton J.P."/>
            <person name="Kanamori H."/>
            <person name="McCombie W.R."/>
            <person name="Ouyang S."/>
            <person name="Schwartz D.C."/>
            <person name="Tanaka T."/>
            <person name="Wu J."/>
            <person name="Zhou S."/>
            <person name="Childs K.L."/>
            <person name="Davidson R.M."/>
            <person name="Lin H."/>
            <person name="Quesada-Ocampo L."/>
            <person name="Vaillancourt B."/>
            <person name="Sakai H."/>
            <person name="Lee S.S."/>
            <person name="Kim J."/>
            <person name="Numa H."/>
            <person name="Itoh T."/>
            <person name="Buell C.R."/>
            <person name="Matsumoto T."/>
        </authorList>
    </citation>
    <scope>GENOME REANNOTATION</scope>
    <source>
        <strain>cv. Nipponbare</strain>
    </source>
</reference>
<reference key="5">
    <citation type="journal article" date="2005" name="PLoS Biol.">
        <title>The genomes of Oryza sativa: a history of duplications.</title>
        <authorList>
            <person name="Yu J."/>
            <person name="Wang J."/>
            <person name="Lin W."/>
            <person name="Li S."/>
            <person name="Li H."/>
            <person name="Zhou J."/>
            <person name="Ni P."/>
            <person name="Dong W."/>
            <person name="Hu S."/>
            <person name="Zeng C."/>
            <person name="Zhang J."/>
            <person name="Zhang Y."/>
            <person name="Li R."/>
            <person name="Xu Z."/>
            <person name="Li S."/>
            <person name="Li X."/>
            <person name="Zheng H."/>
            <person name="Cong L."/>
            <person name="Lin L."/>
            <person name="Yin J."/>
            <person name="Geng J."/>
            <person name="Li G."/>
            <person name="Shi J."/>
            <person name="Liu J."/>
            <person name="Lv H."/>
            <person name="Li J."/>
            <person name="Wang J."/>
            <person name="Deng Y."/>
            <person name="Ran L."/>
            <person name="Shi X."/>
            <person name="Wang X."/>
            <person name="Wu Q."/>
            <person name="Li C."/>
            <person name="Ren X."/>
            <person name="Wang J."/>
            <person name="Wang X."/>
            <person name="Li D."/>
            <person name="Liu D."/>
            <person name="Zhang X."/>
            <person name="Ji Z."/>
            <person name="Zhao W."/>
            <person name="Sun Y."/>
            <person name="Zhang Z."/>
            <person name="Bao J."/>
            <person name="Han Y."/>
            <person name="Dong L."/>
            <person name="Ji J."/>
            <person name="Chen P."/>
            <person name="Wu S."/>
            <person name="Liu J."/>
            <person name="Xiao Y."/>
            <person name="Bu D."/>
            <person name="Tan J."/>
            <person name="Yang L."/>
            <person name="Ye C."/>
            <person name="Zhang J."/>
            <person name="Xu J."/>
            <person name="Zhou Y."/>
            <person name="Yu Y."/>
            <person name="Zhang B."/>
            <person name="Zhuang S."/>
            <person name="Wei H."/>
            <person name="Liu B."/>
            <person name="Lei M."/>
            <person name="Yu H."/>
            <person name="Li Y."/>
            <person name="Xu H."/>
            <person name="Wei S."/>
            <person name="He X."/>
            <person name="Fang L."/>
            <person name="Zhang Z."/>
            <person name="Zhang Y."/>
            <person name="Huang X."/>
            <person name="Su Z."/>
            <person name="Tong W."/>
            <person name="Li J."/>
            <person name="Tong Z."/>
            <person name="Li S."/>
            <person name="Ye J."/>
            <person name="Wang L."/>
            <person name="Fang L."/>
            <person name="Lei T."/>
            <person name="Chen C.-S."/>
            <person name="Chen H.-C."/>
            <person name="Xu Z."/>
            <person name="Li H."/>
            <person name="Huang H."/>
            <person name="Zhang F."/>
            <person name="Xu H."/>
            <person name="Li N."/>
            <person name="Zhao C."/>
            <person name="Li S."/>
            <person name="Dong L."/>
            <person name="Huang Y."/>
            <person name="Li L."/>
            <person name="Xi Y."/>
            <person name="Qi Q."/>
            <person name="Li W."/>
            <person name="Zhang B."/>
            <person name="Hu W."/>
            <person name="Zhang Y."/>
            <person name="Tian X."/>
            <person name="Jiao Y."/>
            <person name="Liang X."/>
            <person name="Jin J."/>
            <person name="Gao L."/>
            <person name="Zheng W."/>
            <person name="Hao B."/>
            <person name="Liu S.-M."/>
            <person name="Wang W."/>
            <person name="Yuan L."/>
            <person name="Cao M."/>
            <person name="McDermott J."/>
            <person name="Samudrala R."/>
            <person name="Wang J."/>
            <person name="Wong G.K.-S."/>
            <person name="Yang H."/>
        </authorList>
    </citation>
    <scope>NUCLEOTIDE SEQUENCE [LARGE SCALE GENOMIC DNA]</scope>
    <source>
        <strain>cv. Nipponbare</strain>
    </source>
</reference>
<reference key="6">
    <citation type="journal article" date="2003" name="Science">
        <title>Collection, mapping, and annotation of over 28,000 cDNA clones from japonica rice.</title>
        <authorList>
            <consortium name="The rice full-length cDNA consortium"/>
        </authorList>
    </citation>
    <scope>NUCLEOTIDE SEQUENCE [LARGE SCALE MRNA]</scope>
    <source>
        <strain>cv. Nipponbare</strain>
    </source>
</reference>
<reference key="7">
    <citation type="journal article" date="2006" name="Genome">
        <title>Distribution, structure, organ-specific expression, and phylogenic analysis of the pathogenesis-related protein-3 chitinase gene family in rice (Oryza sativa L.).</title>
        <authorList>
            <person name="Nakazaki T."/>
            <person name="Tsukiyama T."/>
            <person name="Okumoto Y."/>
            <person name="Kageyama D."/>
            <person name="Naito K."/>
            <person name="Inouye K."/>
            <person name="Tanisaka T."/>
        </authorList>
    </citation>
    <scope>GENE FAMILY</scope>
    <scope>NOMENCLATURE</scope>
    <scope>TISSUE SPECIFICITY</scope>
</reference>
<gene>
    <name type="primary">Cht10</name>
    <name type="synonym">GCH7</name>
    <name type="ordered locus">Os01g0287600</name>
    <name type="ordered locus">LOC_Os01g18400</name>
    <name type="ORF">OsJ_01366</name>
    <name type="ORF">P0511C01.18</name>
</gene>
<keyword id="KW-0119">Carbohydrate metabolism</keyword>
<keyword id="KW-1015">Disulfide bond</keyword>
<keyword id="KW-0325">Glycoprotein</keyword>
<keyword id="KW-0326">Glycosidase</keyword>
<keyword id="KW-0378">Hydrolase</keyword>
<keyword id="KW-0624">Polysaccharide degradation</keyword>
<keyword id="KW-1185">Reference proteome</keyword>
<keyword id="KW-0732">Signal</keyword>
<protein>
    <recommendedName>
        <fullName>Chitinase 10</fullName>
        <ecNumber>3.2.1.14</ecNumber>
    </recommendedName>
    <alternativeName>
        <fullName>Pathogenesis related (PR)-3 chitinase 10</fullName>
    </alternativeName>
</protein>
<accession>Q5NB11</accession>
<accession>A0A0P0V1N2</accession>